<keyword id="KW-0143">Chaperone</keyword>
<keyword id="KW-0963">Cytoplasm</keyword>
<keyword id="KW-0996">Nickel insertion</keyword>
<keyword id="KW-1185">Reference proteome</keyword>
<reference key="1">
    <citation type="journal article" date="2010" name="PLoS ONE">
        <title>The complete genome sequence of Cupriavidus metallidurans strain CH34, a master survivalist in harsh and anthropogenic environments.</title>
        <authorList>
            <person name="Janssen P.J."/>
            <person name="Van Houdt R."/>
            <person name="Moors H."/>
            <person name="Monsieurs P."/>
            <person name="Morin N."/>
            <person name="Michaux A."/>
            <person name="Benotmane M.A."/>
            <person name="Leys N."/>
            <person name="Vallaeys T."/>
            <person name="Lapidus A."/>
            <person name="Monchy S."/>
            <person name="Medigue C."/>
            <person name="Taghavi S."/>
            <person name="McCorkle S."/>
            <person name="Dunn J."/>
            <person name="van der Lelie D."/>
            <person name="Mergeay M."/>
        </authorList>
    </citation>
    <scope>NUCLEOTIDE SEQUENCE [LARGE SCALE GENOMIC DNA]</scope>
    <source>
        <strain>ATCC 43123 / DSM 2839 / NBRC 102507 / CH34</strain>
    </source>
</reference>
<gene>
    <name evidence="1" type="primary">ureD</name>
    <name type="ordered locus">Rmet_0957</name>
</gene>
<accession>Q1LPT3</accession>
<sequence length="293" mass="31470">MRHPDFPSQLAMTSAWHASLRLRFAARAGRTAMVERRHEGPLRVQKPLYPEGEICHGVVLHPPAGVAGGDRLDIDIAVASGAHAVLATPGATKWYKSLGRDAAQHVRIEVAAGGKLDWLPQENIVFDDARARITTDVVVAPGGSAIGWDAVVLGRQASGERWASGALWLDTRVGDPDRALWIEQSHFDGASPLRGAVAGMDGLHILGTLWAIGPGATQELAEALAEHLPYRADLRAGVTCLAGYGTATAQSMLLLRVLGSDMEAVRHLMIDAWTVLRQPMHGVPARPLRLWST</sequence>
<feature type="chain" id="PRO_0000340499" description="Urease accessory protein UreD">
    <location>
        <begin position="1"/>
        <end position="293"/>
    </location>
</feature>
<evidence type="ECO:0000255" key="1">
    <source>
        <dbReference type="HAMAP-Rule" id="MF_01384"/>
    </source>
</evidence>
<protein>
    <recommendedName>
        <fullName evidence="1">Urease accessory protein UreD</fullName>
    </recommendedName>
</protein>
<name>URED_CUPMC</name>
<proteinExistence type="inferred from homology"/>
<comment type="function">
    <text evidence="1">Required for maturation of urease via the functional incorporation of the urease nickel metallocenter.</text>
</comment>
<comment type="subunit">
    <text evidence="1">UreD, UreF and UreG form a complex that acts as a GTP-hydrolysis-dependent molecular chaperone, activating the urease apoprotein by helping to assemble the nickel containing metallocenter of UreC. The UreE protein probably delivers the nickel.</text>
</comment>
<comment type="subcellular location">
    <subcellularLocation>
        <location evidence="1">Cytoplasm</location>
    </subcellularLocation>
</comment>
<comment type="similarity">
    <text evidence="1">Belongs to the UreD family.</text>
</comment>
<organism>
    <name type="scientific">Cupriavidus metallidurans (strain ATCC 43123 / DSM 2839 / NBRC 102507 / CH34)</name>
    <name type="common">Ralstonia metallidurans</name>
    <dbReference type="NCBI Taxonomy" id="266264"/>
    <lineage>
        <taxon>Bacteria</taxon>
        <taxon>Pseudomonadati</taxon>
        <taxon>Pseudomonadota</taxon>
        <taxon>Betaproteobacteria</taxon>
        <taxon>Burkholderiales</taxon>
        <taxon>Burkholderiaceae</taxon>
        <taxon>Cupriavidus</taxon>
    </lineage>
</organism>
<dbReference type="EMBL" id="CP000352">
    <property type="protein sequence ID" value="ABF07843.1"/>
    <property type="molecule type" value="Genomic_DNA"/>
</dbReference>
<dbReference type="RefSeq" id="WP_011515765.1">
    <property type="nucleotide sequence ID" value="NC_007973.1"/>
</dbReference>
<dbReference type="SMR" id="Q1LPT3"/>
<dbReference type="STRING" id="266264.Rmet_0957"/>
<dbReference type="KEGG" id="rme:Rmet_0957"/>
<dbReference type="eggNOG" id="COG0829">
    <property type="taxonomic scope" value="Bacteria"/>
</dbReference>
<dbReference type="HOGENOM" id="CLU_056339_0_0_4"/>
<dbReference type="Proteomes" id="UP000002429">
    <property type="component" value="Chromosome"/>
</dbReference>
<dbReference type="GO" id="GO:0005737">
    <property type="term" value="C:cytoplasm"/>
    <property type="evidence" value="ECO:0007669"/>
    <property type="project" value="UniProtKB-SubCell"/>
</dbReference>
<dbReference type="GO" id="GO:0016151">
    <property type="term" value="F:nickel cation binding"/>
    <property type="evidence" value="ECO:0007669"/>
    <property type="project" value="UniProtKB-UniRule"/>
</dbReference>
<dbReference type="HAMAP" id="MF_01384">
    <property type="entry name" value="UreD"/>
    <property type="match status" value="1"/>
</dbReference>
<dbReference type="InterPro" id="IPR002669">
    <property type="entry name" value="UreD"/>
</dbReference>
<dbReference type="PANTHER" id="PTHR33643">
    <property type="entry name" value="UREASE ACCESSORY PROTEIN D"/>
    <property type="match status" value="1"/>
</dbReference>
<dbReference type="PANTHER" id="PTHR33643:SF1">
    <property type="entry name" value="UREASE ACCESSORY PROTEIN D"/>
    <property type="match status" value="1"/>
</dbReference>
<dbReference type="Pfam" id="PF01774">
    <property type="entry name" value="UreD"/>
    <property type="match status" value="1"/>
</dbReference>